<comment type="function">
    <text evidence="1">This protein is one of the early assembly proteins of the 50S ribosomal subunit, although it is not seen to bind rRNA by itself. It is important during the early stages of 50S assembly.</text>
</comment>
<comment type="subunit">
    <text evidence="1">Part of the 50S ribosomal subunit.</text>
</comment>
<comment type="similarity">
    <text evidence="1">Belongs to the universal ribosomal protein uL13 family.</text>
</comment>
<accession>B8G6P5</accession>
<protein>
    <recommendedName>
        <fullName evidence="1">Large ribosomal subunit protein uL13</fullName>
    </recommendedName>
    <alternativeName>
        <fullName evidence="2">50S ribosomal protein L13</fullName>
    </alternativeName>
</protein>
<reference key="1">
    <citation type="submission" date="2008-12" db="EMBL/GenBank/DDBJ databases">
        <title>Complete sequence of Chloroflexus aggregans DSM 9485.</title>
        <authorList>
            <consortium name="US DOE Joint Genome Institute"/>
            <person name="Lucas S."/>
            <person name="Copeland A."/>
            <person name="Lapidus A."/>
            <person name="Glavina del Rio T."/>
            <person name="Dalin E."/>
            <person name="Tice H."/>
            <person name="Pitluck S."/>
            <person name="Foster B."/>
            <person name="Larimer F."/>
            <person name="Land M."/>
            <person name="Hauser L."/>
            <person name="Kyrpides N."/>
            <person name="Mikhailova N."/>
            <person name="Bryant D.A."/>
            <person name="Richardson P."/>
        </authorList>
    </citation>
    <scope>NUCLEOTIDE SEQUENCE [LARGE SCALE GENOMIC DNA]</scope>
    <source>
        <strain>MD-66 / DSM 9485</strain>
    </source>
</reference>
<organism>
    <name type="scientific">Chloroflexus aggregans (strain MD-66 / DSM 9485)</name>
    <dbReference type="NCBI Taxonomy" id="326427"/>
    <lineage>
        <taxon>Bacteria</taxon>
        <taxon>Bacillati</taxon>
        <taxon>Chloroflexota</taxon>
        <taxon>Chloroflexia</taxon>
        <taxon>Chloroflexales</taxon>
        <taxon>Chloroflexineae</taxon>
        <taxon>Chloroflexaceae</taxon>
        <taxon>Chloroflexus</taxon>
    </lineage>
</organism>
<proteinExistence type="inferred from homology"/>
<name>RL13_CHLAD</name>
<evidence type="ECO:0000255" key="1">
    <source>
        <dbReference type="HAMAP-Rule" id="MF_01366"/>
    </source>
</evidence>
<evidence type="ECO:0000305" key="2"/>
<keyword id="KW-0687">Ribonucleoprotein</keyword>
<keyword id="KW-0689">Ribosomal protein</keyword>
<feature type="chain" id="PRO_1000166858" description="Large ribosomal subunit protein uL13">
    <location>
        <begin position="1"/>
        <end position="143"/>
    </location>
</feature>
<sequence>MKTYHQKPSEVQRDWYVIDASGKVLGRLATQISTLLRGKHKPTFTPSIDGGDFVIVVNAEKIVLTGRKPEQKIYYRHSGYPGGLKEIPYKMMLAKHPERILRLAVKRMLPKNRMGRRLLSKLRIYAGPNHPHAAQQPKPYIPR</sequence>
<dbReference type="EMBL" id="CP001337">
    <property type="protein sequence ID" value="ACL25854.1"/>
    <property type="molecule type" value="Genomic_DNA"/>
</dbReference>
<dbReference type="RefSeq" id="WP_015941710.1">
    <property type="nucleotide sequence ID" value="NC_011831.1"/>
</dbReference>
<dbReference type="SMR" id="B8G6P5"/>
<dbReference type="STRING" id="326427.Cagg_2994"/>
<dbReference type="KEGG" id="cag:Cagg_2994"/>
<dbReference type="eggNOG" id="COG0102">
    <property type="taxonomic scope" value="Bacteria"/>
</dbReference>
<dbReference type="HOGENOM" id="CLU_082184_2_2_0"/>
<dbReference type="OrthoDB" id="9801330at2"/>
<dbReference type="Proteomes" id="UP000002508">
    <property type="component" value="Chromosome"/>
</dbReference>
<dbReference type="GO" id="GO:0022625">
    <property type="term" value="C:cytosolic large ribosomal subunit"/>
    <property type="evidence" value="ECO:0007669"/>
    <property type="project" value="TreeGrafter"/>
</dbReference>
<dbReference type="GO" id="GO:0003729">
    <property type="term" value="F:mRNA binding"/>
    <property type="evidence" value="ECO:0007669"/>
    <property type="project" value="TreeGrafter"/>
</dbReference>
<dbReference type="GO" id="GO:0003735">
    <property type="term" value="F:structural constituent of ribosome"/>
    <property type="evidence" value="ECO:0007669"/>
    <property type="project" value="InterPro"/>
</dbReference>
<dbReference type="GO" id="GO:0017148">
    <property type="term" value="P:negative regulation of translation"/>
    <property type="evidence" value="ECO:0007669"/>
    <property type="project" value="TreeGrafter"/>
</dbReference>
<dbReference type="GO" id="GO:0006412">
    <property type="term" value="P:translation"/>
    <property type="evidence" value="ECO:0007669"/>
    <property type="project" value="UniProtKB-UniRule"/>
</dbReference>
<dbReference type="CDD" id="cd00392">
    <property type="entry name" value="Ribosomal_L13"/>
    <property type="match status" value="1"/>
</dbReference>
<dbReference type="FunFam" id="3.90.1180.10:FF:000001">
    <property type="entry name" value="50S ribosomal protein L13"/>
    <property type="match status" value="1"/>
</dbReference>
<dbReference type="Gene3D" id="3.90.1180.10">
    <property type="entry name" value="Ribosomal protein L13"/>
    <property type="match status" value="1"/>
</dbReference>
<dbReference type="HAMAP" id="MF_01366">
    <property type="entry name" value="Ribosomal_uL13"/>
    <property type="match status" value="1"/>
</dbReference>
<dbReference type="InterPro" id="IPR005822">
    <property type="entry name" value="Ribosomal_uL13"/>
</dbReference>
<dbReference type="InterPro" id="IPR005823">
    <property type="entry name" value="Ribosomal_uL13_bac-type"/>
</dbReference>
<dbReference type="InterPro" id="IPR023563">
    <property type="entry name" value="Ribosomal_uL13_CS"/>
</dbReference>
<dbReference type="InterPro" id="IPR036899">
    <property type="entry name" value="Ribosomal_uL13_sf"/>
</dbReference>
<dbReference type="NCBIfam" id="TIGR01066">
    <property type="entry name" value="rplM_bact"/>
    <property type="match status" value="1"/>
</dbReference>
<dbReference type="PANTHER" id="PTHR11545:SF2">
    <property type="entry name" value="LARGE RIBOSOMAL SUBUNIT PROTEIN UL13M"/>
    <property type="match status" value="1"/>
</dbReference>
<dbReference type="PANTHER" id="PTHR11545">
    <property type="entry name" value="RIBOSOMAL PROTEIN L13"/>
    <property type="match status" value="1"/>
</dbReference>
<dbReference type="Pfam" id="PF00572">
    <property type="entry name" value="Ribosomal_L13"/>
    <property type="match status" value="1"/>
</dbReference>
<dbReference type="PIRSF" id="PIRSF002181">
    <property type="entry name" value="Ribosomal_L13"/>
    <property type="match status" value="1"/>
</dbReference>
<dbReference type="SUPFAM" id="SSF52161">
    <property type="entry name" value="Ribosomal protein L13"/>
    <property type="match status" value="1"/>
</dbReference>
<dbReference type="PROSITE" id="PS00783">
    <property type="entry name" value="RIBOSOMAL_L13"/>
    <property type="match status" value="1"/>
</dbReference>
<gene>
    <name evidence="1" type="primary">rplM</name>
    <name type="ordered locus">Cagg_2994</name>
</gene>